<accession>P56397</accession>
<feature type="chain" id="PRO_0000176102" description="Uracil-DNA glycosylase">
    <location>
        <begin position="1"/>
        <end position="233"/>
    </location>
</feature>
<feature type="active site" description="Proton acceptor" evidence="1">
    <location>
        <position position="70"/>
    </location>
</feature>
<gene>
    <name type="primary">ung</name>
    <name type="ordered locus">HP_1347</name>
</gene>
<reference key="1">
    <citation type="journal article" date="1997" name="Nature">
        <title>The complete genome sequence of the gastric pathogen Helicobacter pylori.</title>
        <authorList>
            <person name="Tomb J.-F."/>
            <person name="White O."/>
            <person name="Kerlavage A.R."/>
            <person name="Clayton R.A."/>
            <person name="Sutton G.G."/>
            <person name="Fleischmann R.D."/>
            <person name="Ketchum K.A."/>
            <person name="Klenk H.-P."/>
            <person name="Gill S.R."/>
            <person name="Dougherty B.A."/>
            <person name="Nelson K.E."/>
            <person name="Quackenbush J."/>
            <person name="Zhou L."/>
            <person name="Kirkness E.F."/>
            <person name="Peterson S.N."/>
            <person name="Loftus B.J."/>
            <person name="Richardson D.L."/>
            <person name="Dodson R.J."/>
            <person name="Khalak H.G."/>
            <person name="Glodek A."/>
            <person name="McKenney K."/>
            <person name="FitzGerald L.M."/>
            <person name="Lee N."/>
            <person name="Adams M.D."/>
            <person name="Hickey E.K."/>
            <person name="Berg D.E."/>
            <person name="Gocayne J.D."/>
            <person name="Utterback T.R."/>
            <person name="Peterson J.D."/>
            <person name="Kelley J.M."/>
            <person name="Cotton M.D."/>
            <person name="Weidman J.F."/>
            <person name="Fujii C."/>
            <person name="Bowman C."/>
            <person name="Watthey L."/>
            <person name="Wallin E."/>
            <person name="Hayes W.S."/>
            <person name="Borodovsky M."/>
            <person name="Karp P.D."/>
            <person name="Smith H.O."/>
            <person name="Fraser C.M."/>
            <person name="Venter J.C."/>
        </authorList>
    </citation>
    <scope>NUCLEOTIDE SEQUENCE [LARGE SCALE GENOMIC DNA]</scope>
    <source>
        <strain>ATCC 700392 / 26695</strain>
    </source>
</reference>
<proteinExistence type="inferred from homology"/>
<keyword id="KW-0963">Cytoplasm</keyword>
<keyword id="KW-0227">DNA damage</keyword>
<keyword id="KW-0234">DNA repair</keyword>
<keyword id="KW-0378">Hydrolase</keyword>
<keyword id="KW-1185">Reference proteome</keyword>
<sequence>MKLFDYAPLSLAWREFLQSEFKKPYFLEIEKRYLEALKIPKTIFPKSSNLFYALNLTPPCAVKIILLGQDPYHSTYLENDQELPVAMGLSFSVEKNAPIPPSLKNIFKELHANLGVPVPCCGDLSAWAKRGMLLLNAILSVEKNQAASHQYIGWEAFSDQILMRLFETTAPLIVVLLGKVAQKKIALIPKNKHIIITAPHPSPLSRGFLGSGVFTSVQKAYREVYRKDFDFSL</sequence>
<comment type="function">
    <text evidence="1">Excises uracil residues from the DNA which can arise as a result of misincorporation of dUMP residues by DNA polymerase or due to deamination of cytosine.</text>
</comment>
<comment type="catalytic activity">
    <reaction>
        <text>Hydrolyzes single-stranded DNA or mismatched double-stranded DNA and polynucleotides, releasing free uracil.</text>
        <dbReference type="EC" id="3.2.2.27"/>
    </reaction>
</comment>
<comment type="subcellular location">
    <subcellularLocation>
        <location evidence="1">Cytoplasm</location>
    </subcellularLocation>
</comment>
<comment type="similarity">
    <text evidence="2">Belongs to the uracil-DNA glycosylase (UDG) superfamily. UNG family.</text>
</comment>
<evidence type="ECO:0000250" key="1"/>
<evidence type="ECO:0000305" key="2"/>
<name>UNG_HELPY</name>
<protein>
    <recommendedName>
        <fullName>Uracil-DNA glycosylase</fullName>
        <shortName>UDG</shortName>
        <ecNumber>3.2.2.27</ecNumber>
    </recommendedName>
</protein>
<dbReference type="EC" id="3.2.2.27"/>
<dbReference type="EMBL" id="AE000511">
    <property type="protein sequence ID" value="AAD08392.1"/>
    <property type="molecule type" value="Genomic_DNA"/>
</dbReference>
<dbReference type="PIR" id="C64688">
    <property type="entry name" value="C64688"/>
</dbReference>
<dbReference type="RefSeq" id="NP_208139.1">
    <property type="nucleotide sequence ID" value="NC_000915.1"/>
</dbReference>
<dbReference type="RefSeq" id="WP_000764827.1">
    <property type="nucleotide sequence ID" value="NC_018939.1"/>
</dbReference>
<dbReference type="SMR" id="P56397"/>
<dbReference type="FunCoup" id="P56397">
    <property type="interactions" value="227"/>
</dbReference>
<dbReference type="STRING" id="85962.HP_1347"/>
<dbReference type="PaxDb" id="85962-C694_06950"/>
<dbReference type="EnsemblBacteria" id="AAD08392">
    <property type="protein sequence ID" value="AAD08392"/>
    <property type="gene ID" value="HP_1347"/>
</dbReference>
<dbReference type="KEGG" id="heo:C694_06950"/>
<dbReference type="KEGG" id="hpy:HP_1347"/>
<dbReference type="PATRIC" id="fig|85962.47.peg.1442"/>
<dbReference type="eggNOG" id="COG0692">
    <property type="taxonomic scope" value="Bacteria"/>
</dbReference>
<dbReference type="InParanoid" id="P56397"/>
<dbReference type="OrthoDB" id="9804372at2"/>
<dbReference type="PhylomeDB" id="P56397"/>
<dbReference type="Proteomes" id="UP000000429">
    <property type="component" value="Chromosome"/>
</dbReference>
<dbReference type="GO" id="GO:0005737">
    <property type="term" value="C:cytoplasm"/>
    <property type="evidence" value="ECO:0007669"/>
    <property type="project" value="UniProtKB-SubCell"/>
</dbReference>
<dbReference type="GO" id="GO:0004844">
    <property type="term" value="F:uracil DNA N-glycosylase activity"/>
    <property type="evidence" value="ECO:0007669"/>
    <property type="project" value="UniProtKB-UniRule"/>
</dbReference>
<dbReference type="GO" id="GO:0097510">
    <property type="term" value="P:base-excision repair, AP site formation via deaminated base removal"/>
    <property type="evidence" value="ECO:0000318"/>
    <property type="project" value="GO_Central"/>
</dbReference>
<dbReference type="CDD" id="cd10027">
    <property type="entry name" value="UDG-F1-like"/>
    <property type="match status" value="1"/>
</dbReference>
<dbReference type="FunFam" id="3.40.470.10:FF:000016">
    <property type="entry name" value="Uracil-DNA glycosylase"/>
    <property type="match status" value="1"/>
</dbReference>
<dbReference type="Gene3D" id="3.40.470.10">
    <property type="entry name" value="Uracil-DNA glycosylase-like domain"/>
    <property type="match status" value="1"/>
</dbReference>
<dbReference type="HAMAP" id="MF_00148">
    <property type="entry name" value="UDG"/>
    <property type="match status" value="1"/>
</dbReference>
<dbReference type="InterPro" id="IPR002043">
    <property type="entry name" value="UDG_fam1"/>
</dbReference>
<dbReference type="InterPro" id="IPR018085">
    <property type="entry name" value="Ura-DNA_Glyclase_AS"/>
</dbReference>
<dbReference type="InterPro" id="IPR005122">
    <property type="entry name" value="Uracil-DNA_glycosylase-like"/>
</dbReference>
<dbReference type="InterPro" id="IPR036895">
    <property type="entry name" value="Uracil-DNA_glycosylase-like_sf"/>
</dbReference>
<dbReference type="NCBIfam" id="NF003588">
    <property type="entry name" value="PRK05254.1-1"/>
    <property type="match status" value="1"/>
</dbReference>
<dbReference type="NCBIfam" id="NF003589">
    <property type="entry name" value="PRK05254.1-2"/>
    <property type="match status" value="1"/>
</dbReference>
<dbReference type="NCBIfam" id="NF003592">
    <property type="entry name" value="PRK05254.1-5"/>
    <property type="match status" value="1"/>
</dbReference>
<dbReference type="NCBIfam" id="TIGR00628">
    <property type="entry name" value="ung"/>
    <property type="match status" value="1"/>
</dbReference>
<dbReference type="PANTHER" id="PTHR11264">
    <property type="entry name" value="URACIL-DNA GLYCOSYLASE"/>
    <property type="match status" value="1"/>
</dbReference>
<dbReference type="PANTHER" id="PTHR11264:SF0">
    <property type="entry name" value="URACIL-DNA GLYCOSYLASE"/>
    <property type="match status" value="1"/>
</dbReference>
<dbReference type="Pfam" id="PF03167">
    <property type="entry name" value="UDG"/>
    <property type="match status" value="1"/>
</dbReference>
<dbReference type="SMART" id="SM00986">
    <property type="entry name" value="UDG"/>
    <property type="match status" value="1"/>
</dbReference>
<dbReference type="SMART" id="SM00987">
    <property type="entry name" value="UreE_C"/>
    <property type="match status" value="1"/>
</dbReference>
<dbReference type="SUPFAM" id="SSF52141">
    <property type="entry name" value="Uracil-DNA glycosylase-like"/>
    <property type="match status" value="1"/>
</dbReference>
<dbReference type="PROSITE" id="PS00130">
    <property type="entry name" value="U_DNA_GLYCOSYLASE"/>
    <property type="match status" value="1"/>
</dbReference>
<organism>
    <name type="scientific">Helicobacter pylori (strain ATCC 700392 / 26695)</name>
    <name type="common">Campylobacter pylori</name>
    <dbReference type="NCBI Taxonomy" id="85962"/>
    <lineage>
        <taxon>Bacteria</taxon>
        <taxon>Pseudomonadati</taxon>
        <taxon>Campylobacterota</taxon>
        <taxon>Epsilonproteobacteria</taxon>
        <taxon>Campylobacterales</taxon>
        <taxon>Helicobacteraceae</taxon>
        <taxon>Helicobacter</taxon>
    </lineage>
</organism>